<accession>Q6FWV1</accession>
<sequence length="504" mass="58398">MAPKLDIILHPPENGEFYSSDDLISGTIVLDLTKSLSIKQIKVGLKGFTETTTKMDSEYVFPQNGMLGPATENKSYHNLVREERRVFPPDNVWDALEGSSKPFKVKPGHYEYMFQFNKLPSKPMCLKNHTKKTICFVSKSQSTMPPSFNTQWRELNKIDNLDLYFYSFGKIIYVVEVEIEMGRPRTWFKPFDKMLREPKIIEFIPEPKKFASNETVTRSGRNNHGVIDYISKNNSSKSLSAMQESEDGVTAIAPNGPDEKFLARNLDQLDINNDLEYEIEETEENPMKRYKCRYPLGLPDGASMMWVEVRSRDIDTIYRQDFLFRQGSGNFDNVYLIVKGNLSFSDFSNISVKPTRLQLNLLETVSYLSQGIGNENFSSLKLMEIDNLSKSDRPLFDTNELKFISSKNHEIMECEIKLKDNPILKRLQFNEEDYKHRGNRLYSFKTCVITRLFSYQLLIDWNINGQTRQTETIIPVQVFAHKRPPPVNEALPRYVEPPSYDDHV</sequence>
<dbReference type="EMBL" id="CR380949">
    <property type="protein sequence ID" value="CAG58199.1"/>
    <property type="molecule type" value="Genomic_DNA"/>
</dbReference>
<dbReference type="RefSeq" id="XP_445293.1">
    <property type="nucleotide sequence ID" value="XM_445293.1"/>
</dbReference>
<dbReference type="FunCoup" id="Q6FWV1">
    <property type="interactions" value="53"/>
</dbReference>
<dbReference type="STRING" id="284593.Q6FWV1"/>
<dbReference type="EnsemblFungi" id="CAGL0C02673g-T">
    <property type="protein sequence ID" value="CAGL0C02673g-T-p1"/>
    <property type="gene ID" value="CAGL0C02673g"/>
</dbReference>
<dbReference type="KEGG" id="cgr:2886915"/>
<dbReference type="CGD" id="CAL0127230">
    <property type="gene designation" value="CAGL0C02673g"/>
</dbReference>
<dbReference type="VEuPathDB" id="FungiDB:B1J91_C02673g"/>
<dbReference type="VEuPathDB" id="FungiDB:CAGL0C02673g"/>
<dbReference type="eggNOG" id="ENOG502QWIY">
    <property type="taxonomic scope" value="Eukaryota"/>
</dbReference>
<dbReference type="HOGENOM" id="CLU_540776_0_0_1"/>
<dbReference type="InParanoid" id="Q6FWV1"/>
<dbReference type="OMA" id="YSFKTCT"/>
<dbReference type="Proteomes" id="UP000002428">
    <property type="component" value="Chromosome C"/>
</dbReference>
<dbReference type="GO" id="GO:0005829">
    <property type="term" value="C:cytosol"/>
    <property type="evidence" value="ECO:0007669"/>
    <property type="project" value="TreeGrafter"/>
</dbReference>
<dbReference type="GO" id="GO:0030674">
    <property type="term" value="F:protein-macromolecule adaptor activity"/>
    <property type="evidence" value="ECO:0007669"/>
    <property type="project" value="TreeGrafter"/>
</dbReference>
<dbReference type="GO" id="GO:0031625">
    <property type="term" value="F:ubiquitin protein ligase binding"/>
    <property type="evidence" value="ECO:0007669"/>
    <property type="project" value="TreeGrafter"/>
</dbReference>
<dbReference type="GO" id="GO:0070086">
    <property type="term" value="P:ubiquitin-dependent endocytosis"/>
    <property type="evidence" value="ECO:0007669"/>
    <property type="project" value="TreeGrafter"/>
</dbReference>
<dbReference type="CDD" id="cd22952">
    <property type="entry name" value="ART10-like"/>
    <property type="match status" value="1"/>
</dbReference>
<dbReference type="Gene3D" id="2.60.40.640">
    <property type="match status" value="1"/>
</dbReference>
<dbReference type="InterPro" id="IPR014752">
    <property type="entry name" value="Arrestin-like_C"/>
</dbReference>
<dbReference type="InterPro" id="IPR011021">
    <property type="entry name" value="Arrestin-like_N"/>
</dbReference>
<dbReference type="InterPro" id="IPR050357">
    <property type="entry name" value="Arrestin_domain-protein"/>
</dbReference>
<dbReference type="PANTHER" id="PTHR11188">
    <property type="entry name" value="ARRESTIN DOMAIN CONTAINING PROTEIN"/>
    <property type="match status" value="1"/>
</dbReference>
<dbReference type="PANTHER" id="PTHR11188:SF174">
    <property type="entry name" value="ARRESTIN-RELATED TRAFFICKING ADAPTER 10-RELATED"/>
    <property type="match status" value="1"/>
</dbReference>
<dbReference type="Pfam" id="PF00339">
    <property type="entry name" value="Arrestin_N"/>
    <property type="match status" value="1"/>
</dbReference>
<organism>
    <name type="scientific">Candida glabrata (strain ATCC 2001 / BCRC 20586 / JCM 3761 / NBRC 0622 / NRRL Y-65 / CBS 138)</name>
    <name type="common">Yeast</name>
    <name type="synonym">Nakaseomyces glabratus</name>
    <dbReference type="NCBI Taxonomy" id="284593"/>
    <lineage>
        <taxon>Eukaryota</taxon>
        <taxon>Fungi</taxon>
        <taxon>Dikarya</taxon>
        <taxon>Ascomycota</taxon>
        <taxon>Saccharomycotina</taxon>
        <taxon>Saccharomycetes</taxon>
        <taxon>Saccharomycetales</taxon>
        <taxon>Saccharomycetaceae</taxon>
        <taxon>Nakaseomyces</taxon>
    </lineage>
</organism>
<evidence type="ECO:0000250" key="1"/>
<evidence type="ECO:0000305" key="2"/>
<comment type="function">
    <text evidence="1">May regulate endocytosis by recruiting RSP5 ubiquitin ligase activity to specific plasma membrane proteins in response to extracellular stimuli.</text>
</comment>
<comment type="subcellular location">
    <subcellularLocation>
        <location evidence="1">Cytoplasm</location>
    </subcellularLocation>
</comment>
<comment type="similarity">
    <text evidence="2">Belongs to the ART10 family.</text>
</comment>
<gene>
    <name type="primary">ART10</name>
    <name type="ordered locus">CAGL0C02673g</name>
</gene>
<protein>
    <recommendedName>
        <fullName>Arrestin-related trafficking adapter 10</fullName>
    </recommendedName>
</protein>
<name>ART10_CANGA</name>
<feature type="chain" id="PRO_0000402192" description="Arrestin-related trafficking adapter 10">
    <location>
        <begin position="1"/>
        <end position="504"/>
    </location>
</feature>
<reference key="1">
    <citation type="journal article" date="2004" name="Nature">
        <title>Genome evolution in yeasts.</title>
        <authorList>
            <person name="Dujon B."/>
            <person name="Sherman D."/>
            <person name="Fischer G."/>
            <person name="Durrens P."/>
            <person name="Casaregola S."/>
            <person name="Lafontaine I."/>
            <person name="de Montigny J."/>
            <person name="Marck C."/>
            <person name="Neuveglise C."/>
            <person name="Talla E."/>
            <person name="Goffard N."/>
            <person name="Frangeul L."/>
            <person name="Aigle M."/>
            <person name="Anthouard V."/>
            <person name="Babour A."/>
            <person name="Barbe V."/>
            <person name="Barnay S."/>
            <person name="Blanchin S."/>
            <person name="Beckerich J.-M."/>
            <person name="Beyne E."/>
            <person name="Bleykasten C."/>
            <person name="Boisrame A."/>
            <person name="Boyer J."/>
            <person name="Cattolico L."/>
            <person name="Confanioleri F."/>
            <person name="de Daruvar A."/>
            <person name="Despons L."/>
            <person name="Fabre E."/>
            <person name="Fairhead C."/>
            <person name="Ferry-Dumazet H."/>
            <person name="Groppi A."/>
            <person name="Hantraye F."/>
            <person name="Hennequin C."/>
            <person name="Jauniaux N."/>
            <person name="Joyet P."/>
            <person name="Kachouri R."/>
            <person name="Kerrest A."/>
            <person name="Koszul R."/>
            <person name="Lemaire M."/>
            <person name="Lesur I."/>
            <person name="Ma L."/>
            <person name="Muller H."/>
            <person name="Nicaud J.-M."/>
            <person name="Nikolski M."/>
            <person name="Oztas S."/>
            <person name="Ozier-Kalogeropoulos O."/>
            <person name="Pellenz S."/>
            <person name="Potier S."/>
            <person name="Richard G.-F."/>
            <person name="Straub M.-L."/>
            <person name="Suleau A."/>
            <person name="Swennen D."/>
            <person name="Tekaia F."/>
            <person name="Wesolowski-Louvel M."/>
            <person name="Westhof E."/>
            <person name="Wirth B."/>
            <person name="Zeniou-Meyer M."/>
            <person name="Zivanovic Y."/>
            <person name="Bolotin-Fukuhara M."/>
            <person name="Thierry A."/>
            <person name="Bouchier C."/>
            <person name="Caudron B."/>
            <person name="Scarpelli C."/>
            <person name="Gaillardin C."/>
            <person name="Weissenbach J."/>
            <person name="Wincker P."/>
            <person name="Souciet J.-L."/>
        </authorList>
    </citation>
    <scope>NUCLEOTIDE SEQUENCE [LARGE SCALE GENOMIC DNA]</scope>
    <source>
        <strain>ATCC 2001 / BCRC 20586 / JCM 3761 / NBRC 0622 / NRRL Y-65 / CBS 138</strain>
    </source>
</reference>
<proteinExistence type="inferred from homology"/>
<keyword id="KW-0963">Cytoplasm</keyword>
<keyword id="KW-0254">Endocytosis</keyword>
<keyword id="KW-1185">Reference proteome</keyword>